<gene>
    <name evidence="1" type="primary">prmA</name>
    <name type="ordered locus">UTI89_C3701</name>
</gene>
<evidence type="ECO:0000255" key="1">
    <source>
        <dbReference type="HAMAP-Rule" id="MF_00735"/>
    </source>
</evidence>
<keyword id="KW-0963">Cytoplasm</keyword>
<keyword id="KW-0489">Methyltransferase</keyword>
<keyword id="KW-0949">S-adenosyl-L-methionine</keyword>
<keyword id="KW-0808">Transferase</keyword>
<organism>
    <name type="scientific">Escherichia coli (strain UTI89 / UPEC)</name>
    <dbReference type="NCBI Taxonomy" id="364106"/>
    <lineage>
        <taxon>Bacteria</taxon>
        <taxon>Pseudomonadati</taxon>
        <taxon>Pseudomonadota</taxon>
        <taxon>Gammaproteobacteria</taxon>
        <taxon>Enterobacterales</taxon>
        <taxon>Enterobacteriaceae</taxon>
        <taxon>Escherichia</taxon>
    </lineage>
</organism>
<protein>
    <recommendedName>
        <fullName evidence="1">Ribosomal protein L11 methyltransferase</fullName>
        <shortName evidence="1">L11 Mtase</shortName>
        <ecNumber evidence="1">2.1.1.-</ecNumber>
    </recommendedName>
</protein>
<comment type="function">
    <text evidence="1">Methylates ribosomal protein L11.</text>
</comment>
<comment type="catalytic activity">
    <reaction evidence="1">
        <text>L-lysyl-[protein] + 3 S-adenosyl-L-methionine = N(6),N(6),N(6)-trimethyl-L-lysyl-[protein] + 3 S-adenosyl-L-homocysteine + 3 H(+)</text>
        <dbReference type="Rhea" id="RHEA:54192"/>
        <dbReference type="Rhea" id="RHEA-COMP:9752"/>
        <dbReference type="Rhea" id="RHEA-COMP:13826"/>
        <dbReference type="ChEBI" id="CHEBI:15378"/>
        <dbReference type="ChEBI" id="CHEBI:29969"/>
        <dbReference type="ChEBI" id="CHEBI:57856"/>
        <dbReference type="ChEBI" id="CHEBI:59789"/>
        <dbReference type="ChEBI" id="CHEBI:61961"/>
    </reaction>
</comment>
<comment type="subcellular location">
    <subcellularLocation>
        <location evidence="1">Cytoplasm</location>
    </subcellularLocation>
</comment>
<comment type="similarity">
    <text evidence="1">Belongs to the methyltransferase superfamily. PrmA family.</text>
</comment>
<sequence>MPWIQLKLNTTGANAEDLSDALMEAGAVSITFQDTHDTPVFEPLPGETRLWGDTDVIGLFDAETDMNDVVAILENHPLLGAGFAHKIEQLEDKDWEREWMDNFHPMRFGERLWICPSWRDVPDENAVNVMLDPGLAFGTGTHPTTSLCLQWLDSLDLTGKTVIDFGCGSGILAIAALKLGAAKAIGIDIDPQAIQASRDNAERNGVSDRLELYLPKDQPEEMKADVVVANILAGPLRELAPLISVLPVSGGLLGLSGILASQAESVCEAYADSFALDPVVEKEEWCRITGRKN</sequence>
<proteinExistence type="inferred from homology"/>
<dbReference type="EC" id="2.1.1.-" evidence="1"/>
<dbReference type="EMBL" id="CP000243">
    <property type="protein sequence ID" value="ABE09145.1"/>
    <property type="molecule type" value="Genomic_DNA"/>
</dbReference>
<dbReference type="RefSeq" id="WP_001145827.1">
    <property type="nucleotide sequence ID" value="NZ_CP064825.1"/>
</dbReference>
<dbReference type="SMR" id="Q1R669"/>
<dbReference type="GeneID" id="75206107"/>
<dbReference type="KEGG" id="eci:UTI89_C3701"/>
<dbReference type="HOGENOM" id="CLU_049382_4_1_6"/>
<dbReference type="Proteomes" id="UP000001952">
    <property type="component" value="Chromosome"/>
</dbReference>
<dbReference type="GO" id="GO:0005829">
    <property type="term" value="C:cytosol"/>
    <property type="evidence" value="ECO:0007669"/>
    <property type="project" value="TreeGrafter"/>
</dbReference>
<dbReference type="GO" id="GO:0016279">
    <property type="term" value="F:protein-lysine N-methyltransferase activity"/>
    <property type="evidence" value="ECO:0007669"/>
    <property type="project" value="TreeGrafter"/>
</dbReference>
<dbReference type="GO" id="GO:0032259">
    <property type="term" value="P:methylation"/>
    <property type="evidence" value="ECO:0007669"/>
    <property type="project" value="UniProtKB-KW"/>
</dbReference>
<dbReference type="CDD" id="cd02440">
    <property type="entry name" value="AdoMet_MTases"/>
    <property type="match status" value="1"/>
</dbReference>
<dbReference type="FunFam" id="3.40.50.150:FF:000021">
    <property type="entry name" value="Ribosomal protein L11 methyltransferase"/>
    <property type="match status" value="1"/>
</dbReference>
<dbReference type="Gene3D" id="3.40.50.150">
    <property type="entry name" value="Vaccinia Virus protein VP39"/>
    <property type="match status" value="1"/>
</dbReference>
<dbReference type="HAMAP" id="MF_00735">
    <property type="entry name" value="Methyltr_PrmA"/>
    <property type="match status" value="1"/>
</dbReference>
<dbReference type="InterPro" id="IPR050078">
    <property type="entry name" value="Ribosomal_L11_MeTrfase_PrmA"/>
</dbReference>
<dbReference type="InterPro" id="IPR004498">
    <property type="entry name" value="Ribosomal_PrmA_MeTrfase"/>
</dbReference>
<dbReference type="InterPro" id="IPR029063">
    <property type="entry name" value="SAM-dependent_MTases_sf"/>
</dbReference>
<dbReference type="NCBIfam" id="TIGR00406">
    <property type="entry name" value="prmA"/>
    <property type="match status" value="1"/>
</dbReference>
<dbReference type="PANTHER" id="PTHR43648">
    <property type="entry name" value="ELECTRON TRANSFER FLAVOPROTEIN BETA SUBUNIT LYSINE METHYLTRANSFERASE"/>
    <property type="match status" value="1"/>
</dbReference>
<dbReference type="PANTHER" id="PTHR43648:SF1">
    <property type="entry name" value="ELECTRON TRANSFER FLAVOPROTEIN BETA SUBUNIT LYSINE METHYLTRANSFERASE"/>
    <property type="match status" value="1"/>
</dbReference>
<dbReference type="Pfam" id="PF06325">
    <property type="entry name" value="PrmA"/>
    <property type="match status" value="1"/>
</dbReference>
<dbReference type="PIRSF" id="PIRSF000401">
    <property type="entry name" value="RPL11_MTase"/>
    <property type="match status" value="1"/>
</dbReference>
<dbReference type="SUPFAM" id="SSF53335">
    <property type="entry name" value="S-adenosyl-L-methionine-dependent methyltransferases"/>
    <property type="match status" value="1"/>
</dbReference>
<accession>Q1R669</accession>
<name>PRMA_ECOUT</name>
<reference key="1">
    <citation type="journal article" date="2006" name="Proc. Natl. Acad. Sci. U.S.A.">
        <title>Identification of genes subject to positive selection in uropathogenic strains of Escherichia coli: a comparative genomics approach.</title>
        <authorList>
            <person name="Chen S.L."/>
            <person name="Hung C.-S."/>
            <person name="Xu J."/>
            <person name="Reigstad C.S."/>
            <person name="Magrini V."/>
            <person name="Sabo A."/>
            <person name="Blasiar D."/>
            <person name="Bieri T."/>
            <person name="Meyer R.R."/>
            <person name="Ozersky P."/>
            <person name="Armstrong J.R."/>
            <person name="Fulton R.S."/>
            <person name="Latreille J.P."/>
            <person name="Spieth J."/>
            <person name="Hooton T.M."/>
            <person name="Mardis E.R."/>
            <person name="Hultgren S.J."/>
            <person name="Gordon J.I."/>
        </authorList>
    </citation>
    <scope>NUCLEOTIDE SEQUENCE [LARGE SCALE GENOMIC DNA]</scope>
    <source>
        <strain>UTI89 / UPEC</strain>
    </source>
</reference>
<feature type="chain" id="PRO_1000046023" description="Ribosomal protein L11 methyltransferase">
    <location>
        <begin position="1"/>
        <end position="293"/>
    </location>
</feature>
<feature type="binding site" evidence="1">
    <location>
        <position position="145"/>
    </location>
    <ligand>
        <name>S-adenosyl-L-methionine</name>
        <dbReference type="ChEBI" id="CHEBI:59789"/>
    </ligand>
</feature>
<feature type="binding site" evidence="1">
    <location>
        <position position="166"/>
    </location>
    <ligand>
        <name>S-adenosyl-L-methionine</name>
        <dbReference type="ChEBI" id="CHEBI:59789"/>
    </ligand>
</feature>
<feature type="binding site" evidence="1">
    <location>
        <position position="188"/>
    </location>
    <ligand>
        <name>S-adenosyl-L-methionine</name>
        <dbReference type="ChEBI" id="CHEBI:59789"/>
    </ligand>
</feature>
<feature type="binding site" evidence="1">
    <location>
        <position position="230"/>
    </location>
    <ligand>
        <name>S-adenosyl-L-methionine</name>
        <dbReference type="ChEBI" id="CHEBI:59789"/>
    </ligand>
</feature>